<feature type="chain" id="PRO_0000394999" description="3-epi-6-deoxocathasterone 23-monooxygenase CYP90D1">
    <location>
        <begin position="1"/>
        <end position="491"/>
    </location>
</feature>
<feature type="transmembrane region" description="Helical" evidence="2">
    <location>
        <begin position="7"/>
        <end position="27"/>
    </location>
</feature>
<feature type="binding site" description="axial binding residue" evidence="1">
    <location>
        <position position="442"/>
    </location>
    <ligand>
        <name>heme</name>
        <dbReference type="ChEBI" id="CHEBI:30413"/>
    </ligand>
    <ligandPart>
        <name>Fe</name>
        <dbReference type="ChEBI" id="CHEBI:18248"/>
    </ligandPart>
</feature>
<keyword id="KW-1069">Brassinosteroid biosynthesis</keyword>
<keyword id="KW-0256">Endoplasmic reticulum</keyword>
<keyword id="KW-0349">Heme</keyword>
<keyword id="KW-0408">Iron</keyword>
<keyword id="KW-0444">Lipid biosynthesis</keyword>
<keyword id="KW-0443">Lipid metabolism</keyword>
<keyword id="KW-0472">Membrane</keyword>
<keyword id="KW-0479">Metal-binding</keyword>
<keyword id="KW-0503">Monooxygenase</keyword>
<keyword id="KW-0560">Oxidoreductase</keyword>
<keyword id="KW-1185">Reference proteome</keyword>
<keyword id="KW-0752">Steroid biosynthesis</keyword>
<keyword id="KW-0812">Transmembrane</keyword>
<keyword id="KW-1133">Transmembrane helix</keyword>
<reference key="1">
    <citation type="submission" date="2001-07" db="EMBL/GenBank/DDBJ databases">
        <title>P450 gene repressed by brassinosteroid.</title>
        <authorList>
            <person name="Shimada Y."/>
        </authorList>
    </citation>
    <scope>NUCLEOTIDE SEQUENCE [MRNA]</scope>
    <source>
        <strain>cv. Columbia</strain>
    </source>
</reference>
<reference key="2">
    <citation type="journal article" date="2000" name="DNA Res.">
        <title>Structural analysis of Arabidopsis thaliana chromosome 3. II. Sequence features of the 4,251,695 bp regions covered by 90 P1, TAC and BAC clones.</title>
        <authorList>
            <person name="Kaneko T."/>
            <person name="Katoh T."/>
            <person name="Sato S."/>
            <person name="Nakamura Y."/>
            <person name="Asamizu E."/>
            <person name="Tabata S."/>
        </authorList>
    </citation>
    <scope>NUCLEOTIDE SEQUENCE [LARGE SCALE GENOMIC DNA]</scope>
    <source>
        <strain>cv. Columbia</strain>
    </source>
</reference>
<reference key="3">
    <citation type="journal article" date="2017" name="Plant J.">
        <title>Araport11: a complete reannotation of the Arabidopsis thaliana reference genome.</title>
        <authorList>
            <person name="Cheng C.Y."/>
            <person name="Krishnakumar V."/>
            <person name="Chan A.P."/>
            <person name="Thibaud-Nissen F."/>
            <person name="Schobel S."/>
            <person name="Town C.D."/>
        </authorList>
    </citation>
    <scope>GENOME REANNOTATION</scope>
    <source>
        <strain>cv. Columbia</strain>
    </source>
</reference>
<reference key="4">
    <citation type="journal article" date="2003" name="Science">
        <title>Empirical analysis of transcriptional activity in the Arabidopsis genome.</title>
        <authorList>
            <person name="Yamada K."/>
            <person name="Lim J."/>
            <person name="Dale J.M."/>
            <person name="Chen H."/>
            <person name="Shinn P."/>
            <person name="Palm C.J."/>
            <person name="Southwick A.M."/>
            <person name="Wu H.C."/>
            <person name="Kim C.J."/>
            <person name="Nguyen M."/>
            <person name="Pham P.K."/>
            <person name="Cheuk R.F."/>
            <person name="Karlin-Newmann G."/>
            <person name="Liu S.X."/>
            <person name="Lam B."/>
            <person name="Sakano H."/>
            <person name="Wu T."/>
            <person name="Yu G."/>
            <person name="Miranda M."/>
            <person name="Quach H.L."/>
            <person name="Tripp M."/>
            <person name="Chang C.H."/>
            <person name="Lee J.M."/>
            <person name="Toriumi M.J."/>
            <person name="Chan M.M."/>
            <person name="Tang C.C."/>
            <person name="Onodera C.S."/>
            <person name="Deng J.M."/>
            <person name="Akiyama K."/>
            <person name="Ansari Y."/>
            <person name="Arakawa T."/>
            <person name="Banh J."/>
            <person name="Banno F."/>
            <person name="Bowser L."/>
            <person name="Brooks S.Y."/>
            <person name="Carninci P."/>
            <person name="Chao Q."/>
            <person name="Choy N."/>
            <person name="Enju A."/>
            <person name="Goldsmith A.D."/>
            <person name="Gurjal M."/>
            <person name="Hansen N.F."/>
            <person name="Hayashizaki Y."/>
            <person name="Johnson-Hopson C."/>
            <person name="Hsuan V.W."/>
            <person name="Iida K."/>
            <person name="Karnes M."/>
            <person name="Khan S."/>
            <person name="Koesema E."/>
            <person name="Ishida J."/>
            <person name="Jiang P.X."/>
            <person name="Jones T."/>
            <person name="Kawai J."/>
            <person name="Kamiya A."/>
            <person name="Meyers C."/>
            <person name="Nakajima M."/>
            <person name="Narusaka M."/>
            <person name="Seki M."/>
            <person name="Sakurai T."/>
            <person name="Satou M."/>
            <person name="Tamse R."/>
            <person name="Vaysberg M."/>
            <person name="Wallender E.K."/>
            <person name="Wong C."/>
            <person name="Yamamura Y."/>
            <person name="Yuan S."/>
            <person name="Shinozaki K."/>
            <person name="Davis R.W."/>
            <person name="Theologis A."/>
            <person name="Ecker J.R."/>
        </authorList>
    </citation>
    <scope>NUCLEOTIDE SEQUENCE [LARGE SCALE MRNA]</scope>
    <source>
        <strain>cv. Columbia</strain>
    </source>
</reference>
<reference key="5">
    <citation type="journal article" date="2005" name="Plant J.">
        <title>CYP90C1 and CYP90D1 are involved in different steps in the brassinosteroid biosynthesis pathway in Arabidopsis thaliana.</title>
        <authorList>
            <person name="Kim G.T."/>
            <person name="Fujioka S."/>
            <person name="Kozuka T."/>
            <person name="Tax F.E."/>
            <person name="Takatsuto S."/>
            <person name="Yoshida S."/>
            <person name="Tsukaya H."/>
        </authorList>
    </citation>
    <scope>FUNCTION</scope>
    <scope>TISSUE SPECIFICITY</scope>
    <scope>DISRUPTION PHENOTYPE</scope>
</reference>
<reference key="6">
    <citation type="journal article" date="2006" name="Plant Cell">
        <title>C-23 hydroxylation by Arabidopsis CYP90C1 and CYP90D1 reveals a novel shortcut in brassinosteroid biosynthesis.</title>
        <authorList>
            <person name="Ohnishi T."/>
            <person name="Szatmari A.M."/>
            <person name="Watanabe B."/>
            <person name="Fujita S."/>
            <person name="Bancos S."/>
            <person name="Koncz C."/>
            <person name="Lafos M."/>
            <person name="Shibata K."/>
            <person name="Yokota T."/>
            <person name="Sakata K."/>
            <person name="Szekeres M."/>
            <person name="Mizutani M."/>
        </authorList>
    </citation>
    <scope>FUNCTION</scope>
    <scope>CATALYTIC ACTIVITY</scope>
    <scope>BIOPHYSICOCHEMICAL PROPERTIES</scope>
</reference>
<comment type="function">
    <text evidence="3 4">Involved in brassinosteroid (BR) biosynthesis (PubMed:15703058, PubMed:17138693). May convert teasterone (TE) to 3-dehydroteasterone (3DT, 3-DHT), or 6-deoxoteasterone (6-deoxoTE) to 3-dehydro-6-deoxoteasterone (6-deoxo3DT, 6-deoxo3DHT) (PubMed:15703058). C-23 hydroxylase that converts directly (22S,24R)-22-hydroxy-5-alpha-ergostan-3-one and 3-epi-6-deoxocathasterone to 3-dehydro-6-deoxoteasterone (6-deoxo3DT, 6-deoxo3DHT) and 6-deoxotyphasterol (6-deoxoTY), respectively (PubMed:17138693). These C-23 hydroxylation shortcuts bypass campestanol, 6-deoxocathasterone, and 6-deoxoteasterone (6-deoxoTE) (PubMed:17138693). Also catalyzes the conversion of cathasterone to teasterone (TE), 6-deoxotyphasterol (6-deoxoTY) to 6-deoxocathasterone (6-deoxoCT), (22S,24R)-22-hydroxyergost-4-en-3-one (22-OH-4-en-3-one) to (22R,23R)-22,23-dihydroxy-campest-4-en-3-one (22,23-diOH-4-en-3-one) and (22S)-22-hydroxycampesterol (22-OHCR) to (22R,23R)-22,23-dihydroxycampesterol (22,23-diOHCR) (PubMed:17138693).</text>
</comment>
<comment type="catalytic activity">
    <reaction evidence="4">
        <text>3-epi-6-deoxocathasterone + reduced [NADPH--hemoprotein reductase] + O2 = 6-deoxotyphasterol + oxidized [NADPH--hemoprotein reductase] + H2O + H(+)</text>
        <dbReference type="Rhea" id="RHEA:27321"/>
        <dbReference type="Rhea" id="RHEA-COMP:11964"/>
        <dbReference type="Rhea" id="RHEA-COMP:11965"/>
        <dbReference type="ChEBI" id="CHEBI:15377"/>
        <dbReference type="ChEBI" id="CHEBI:15378"/>
        <dbReference type="ChEBI" id="CHEBI:15379"/>
        <dbReference type="ChEBI" id="CHEBI:20717"/>
        <dbReference type="ChEBI" id="CHEBI:57618"/>
        <dbReference type="ChEBI" id="CHEBI:58210"/>
        <dbReference type="ChEBI" id="CHEBI:59410"/>
        <dbReference type="EC" id="1.14.14.147"/>
    </reaction>
</comment>
<comment type="catalytic activity">
    <reaction evidence="4">
        <text>(22S,24R)-22-hydroxy-5alpha-ergostan-3-one + reduced [NADPH--hemoprotein reductase] + O2 = 3-dehydro-6-deoxoteasterone + oxidized [NADPH--hemoprotein reductase] + H2O + H(+)</text>
        <dbReference type="Rhea" id="RHEA:27325"/>
        <dbReference type="Rhea" id="RHEA-COMP:11964"/>
        <dbReference type="Rhea" id="RHEA-COMP:11965"/>
        <dbReference type="ChEBI" id="CHEBI:15377"/>
        <dbReference type="ChEBI" id="CHEBI:15378"/>
        <dbReference type="ChEBI" id="CHEBI:15379"/>
        <dbReference type="ChEBI" id="CHEBI:20710"/>
        <dbReference type="ChEBI" id="CHEBI:57618"/>
        <dbReference type="ChEBI" id="CHEBI:58210"/>
        <dbReference type="ChEBI" id="CHEBI:59411"/>
        <dbReference type="EC" id="1.14.14.147"/>
    </reaction>
</comment>
<comment type="cofactor">
    <cofactor evidence="1">
        <name>heme</name>
        <dbReference type="ChEBI" id="CHEBI:30413"/>
    </cofactor>
</comment>
<comment type="biophysicochemical properties">
    <kinetics>
        <KM evidence="4">18.1 uM for (22S)-22-hydroxycampesterol</KM>
        <KM evidence="4">0.73 uM for (22S,24R)-22-hydroxy-5-alpha-ergostan-3-one</KM>
        <KM evidence="4">0.77 uM for (22S,24R)-22-hydroxyergost-4-en-3-one</KM>
        <KM evidence="4">1.06 uM for 3-epi-6-deoxocathasterone</KM>
        <KM evidence="4">16.9 uM for 6-deoxocathasterone</KM>
        <text evidence="4">kcat is 0.12 min(-1) for (22S)-22-hydroxycampesterol (PubMed:17138693). kcat is 1.27 min(-1) for (22S,24R)-22-hydroxy-5-alpha-ergostan-3-one (PubMed:17138693). kcat is 1.01 min(-1) for (22S,24R)-22-hydroxyergost-4-en-3-one (PubMed:17138693). kcat is 1.10 min(-1) for 3-epi-6-deoxocathasterone (PubMed:17138693). kcat is 0.29 min(-1) for 6-deoxocathasterone (PubMed:17138693).</text>
    </kinetics>
</comment>
<comment type="pathway">
    <text evidence="7">Plant hormone biosynthesis; brassinosteroid biosynthesis.</text>
</comment>
<comment type="subcellular location">
    <subcellularLocation>
        <location evidence="7">Endoplasmic reticulum membrane</location>
        <topology evidence="7">Single-pass membrane protein</topology>
    </subcellularLocation>
</comment>
<comment type="tissue specificity">
    <text evidence="3">Expressed in leaf vascular tissue.</text>
</comment>
<comment type="disruption phenotype">
    <text evidence="3">No visible phenotype under normal growth conditions, but the double mutant plants cyp90c1 and cyp90d1 exhibit a characteristic brassinosteroid-deficient dwarf phenotype.</text>
</comment>
<comment type="similarity">
    <text evidence="7">Belongs to the cytochrome P450 family.</text>
</comment>
<comment type="sequence caution" evidence="7">
    <conflict type="erroneous gene model prediction">
        <sequence resource="EMBL-CDS" id="BAB01922"/>
    </conflict>
</comment>
<organism>
    <name type="scientific">Arabidopsis thaliana</name>
    <name type="common">Mouse-ear cress</name>
    <dbReference type="NCBI Taxonomy" id="3702"/>
    <lineage>
        <taxon>Eukaryota</taxon>
        <taxon>Viridiplantae</taxon>
        <taxon>Streptophyta</taxon>
        <taxon>Embryophyta</taxon>
        <taxon>Tracheophyta</taxon>
        <taxon>Spermatophyta</taxon>
        <taxon>Magnoliopsida</taxon>
        <taxon>eudicotyledons</taxon>
        <taxon>Gunneridae</taxon>
        <taxon>Pentapetalae</taxon>
        <taxon>rosids</taxon>
        <taxon>malvids</taxon>
        <taxon>Brassicales</taxon>
        <taxon>Brassicaceae</taxon>
        <taxon>Camelineae</taxon>
        <taxon>Arabidopsis</taxon>
    </lineage>
</organism>
<protein>
    <recommendedName>
        <fullName evidence="7">3-epi-6-deoxocathasterone 23-monooxygenase CYP90D1</fullName>
        <shortName evidence="6">3-dehydro-6-deoxoteasterone synthase</shortName>
        <ecNumber evidence="4">1.14.14.147</ecNumber>
    </recommendedName>
    <alternativeName>
        <fullName evidence="6">(22R,23R)-22,23-dihydroxy-campest-4-en-3-one synthase</fullName>
        <ecNumber evidence="4">1.14.14.-</ecNumber>
    </alternativeName>
    <alternativeName>
        <fullName evidence="6">(22R,23R)-22,23-dihydroxycampesterol synthase</fullName>
        <ecNumber evidence="4">1.14.14.-</ecNumber>
    </alternativeName>
    <alternativeName>
        <fullName evidence="6">6-deoxoteasterone synthase</fullName>
        <ecNumber evidence="4">1.14.14.-</ecNumber>
    </alternativeName>
    <alternativeName>
        <fullName evidence="5">Cytochrome P450 90D1</fullName>
    </alternativeName>
    <alternativeName>
        <fullName evidence="6">Teasterone synthase</fullName>
        <ecNumber evidence="4">1.14.14.-</ecNumber>
    </alternativeName>
</protein>
<evidence type="ECO:0000250" key="1">
    <source>
        <dbReference type="UniProtKB" id="Q96242"/>
    </source>
</evidence>
<evidence type="ECO:0000255" key="2"/>
<evidence type="ECO:0000269" key="3">
    <source>
    </source>
</evidence>
<evidence type="ECO:0000269" key="4">
    <source>
    </source>
</evidence>
<evidence type="ECO:0000303" key="5">
    <source>
    </source>
</evidence>
<evidence type="ECO:0000303" key="6">
    <source>
    </source>
</evidence>
<evidence type="ECO:0000305" key="7"/>
<evidence type="ECO:0000312" key="8">
    <source>
        <dbReference type="Araport" id="AT3G13730"/>
    </source>
</evidence>
<evidence type="ECO:0000312" key="9">
    <source>
        <dbReference type="EMBL" id="BAB01922.1"/>
    </source>
</evidence>
<dbReference type="EC" id="1.14.14.147" evidence="4"/>
<dbReference type="EC" id="1.14.14.-" evidence="4"/>
<dbReference type="EMBL" id="AB066286">
    <property type="protein sequence ID" value="BAB62109.1"/>
    <property type="molecule type" value="mRNA"/>
</dbReference>
<dbReference type="EMBL" id="AP001307">
    <property type="protein sequence ID" value="BAB01922.1"/>
    <property type="status" value="ALT_SEQ"/>
    <property type="molecule type" value="Genomic_DNA"/>
</dbReference>
<dbReference type="EMBL" id="CP002686">
    <property type="protein sequence ID" value="AEE75404.1"/>
    <property type="molecule type" value="Genomic_DNA"/>
</dbReference>
<dbReference type="EMBL" id="BT004084">
    <property type="protein sequence ID" value="AAO42111.1"/>
    <property type="molecule type" value="mRNA"/>
</dbReference>
<dbReference type="EMBL" id="BT005093">
    <property type="protein sequence ID" value="AAO50626.1"/>
    <property type="molecule type" value="mRNA"/>
</dbReference>
<dbReference type="RefSeq" id="NP_001327080.1">
    <property type="nucleotide sequence ID" value="NM_001338068.1"/>
</dbReference>
<dbReference type="RefSeq" id="NP_566462.1">
    <property type="nucleotide sequence ID" value="NM_112223.3"/>
</dbReference>
<dbReference type="SMR" id="Q94IA6"/>
<dbReference type="FunCoup" id="Q94IA6">
    <property type="interactions" value="171"/>
</dbReference>
<dbReference type="STRING" id="3702.Q94IA6"/>
<dbReference type="PaxDb" id="3702-AT3G13730.1"/>
<dbReference type="ProteomicsDB" id="240584"/>
<dbReference type="EnsemblPlants" id="AT3G13730.1">
    <property type="protein sequence ID" value="AT3G13730.1"/>
    <property type="gene ID" value="AT3G13730"/>
</dbReference>
<dbReference type="GeneID" id="820582"/>
<dbReference type="Gramene" id="AT3G13730.1">
    <property type="protein sequence ID" value="AT3G13730.1"/>
    <property type="gene ID" value="AT3G13730"/>
</dbReference>
<dbReference type="KEGG" id="ath:AT3G13730"/>
<dbReference type="Araport" id="AT3G13730"/>
<dbReference type="TAIR" id="AT3G13730">
    <property type="gene designation" value="CYP90D1"/>
</dbReference>
<dbReference type="eggNOG" id="KOG0157">
    <property type="taxonomic scope" value="Eukaryota"/>
</dbReference>
<dbReference type="HOGENOM" id="CLU_001570_15_5_1"/>
<dbReference type="InParanoid" id="Q94IA6"/>
<dbReference type="OMA" id="MKRRMPV"/>
<dbReference type="PhylomeDB" id="Q94IA6"/>
<dbReference type="BioCyc" id="ARA:AT3G13730-MONOMER"/>
<dbReference type="BioCyc" id="MetaCyc:AT3G13730-MONOMER"/>
<dbReference type="SABIO-RK" id="Q94IA6"/>
<dbReference type="UniPathway" id="UPA00381"/>
<dbReference type="PRO" id="PR:Q94IA6"/>
<dbReference type="Proteomes" id="UP000006548">
    <property type="component" value="Chromosome 3"/>
</dbReference>
<dbReference type="ExpressionAtlas" id="Q94IA6">
    <property type="expression patterns" value="baseline and differential"/>
</dbReference>
<dbReference type="GO" id="GO:0005789">
    <property type="term" value="C:endoplasmic reticulum membrane"/>
    <property type="evidence" value="ECO:0007669"/>
    <property type="project" value="UniProtKB-SubCell"/>
</dbReference>
<dbReference type="GO" id="GO:0102097">
    <property type="term" value="F:22alpha-hydroxysteroid 23-monooxygenase activity"/>
    <property type="evidence" value="ECO:0007669"/>
    <property type="project" value="UniProtKB-EC"/>
</dbReference>
<dbReference type="GO" id="GO:0020037">
    <property type="term" value="F:heme binding"/>
    <property type="evidence" value="ECO:0007669"/>
    <property type="project" value="InterPro"/>
</dbReference>
<dbReference type="GO" id="GO:0005506">
    <property type="term" value="F:iron ion binding"/>
    <property type="evidence" value="ECO:0007669"/>
    <property type="project" value="InterPro"/>
</dbReference>
<dbReference type="GO" id="GO:0016709">
    <property type="term" value="F:oxidoreductase activity, acting on paired donors, with incorporation or reduction of molecular oxygen, NAD(P)H as one donor, and incorporation of one atom of oxygen"/>
    <property type="evidence" value="ECO:0000314"/>
    <property type="project" value="TAIR"/>
</dbReference>
<dbReference type="GO" id="GO:0016132">
    <property type="term" value="P:brassinosteroid biosynthetic process"/>
    <property type="evidence" value="ECO:0000315"/>
    <property type="project" value="TAIR"/>
</dbReference>
<dbReference type="GO" id="GO:0048366">
    <property type="term" value="P:leaf development"/>
    <property type="evidence" value="ECO:0000316"/>
    <property type="project" value="TAIR"/>
</dbReference>
<dbReference type="GO" id="GO:0048441">
    <property type="term" value="P:petal development"/>
    <property type="evidence" value="ECO:0000316"/>
    <property type="project" value="TAIR"/>
</dbReference>
<dbReference type="GO" id="GO:0048443">
    <property type="term" value="P:stamen development"/>
    <property type="evidence" value="ECO:0000316"/>
    <property type="project" value="TAIR"/>
</dbReference>
<dbReference type="CDD" id="cd11043">
    <property type="entry name" value="CYP90-like"/>
    <property type="match status" value="1"/>
</dbReference>
<dbReference type="FunFam" id="1.10.630.10:FF:000048">
    <property type="entry name" value="3-epi-6-deoxocathasterone 23-monooxygenase CYP90D1"/>
    <property type="match status" value="1"/>
</dbReference>
<dbReference type="Gene3D" id="1.10.630.10">
    <property type="entry name" value="Cytochrome P450"/>
    <property type="match status" value="1"/>
</dbReference>
<dbReference type="InterPro" id="IPR001128">
    <property type="entry name" value="Cyt_P450"/>
</dbReference>
<dbReference type="InterPro" id="IPR017972">
    <property type="entry name" value="Cyt_P450_CS"/>
</dbReference>
<dbReference type="InterPro" id="IPR002401">
    <property type="entry name" value="Cyt_P450_E_grp-I"/>
</dbReference>
<dbReference type="InterPro" id="IPR036396">
    <property type="entry name" value="Cyt_P450_sf"/>
</dbReference>
<dbReference type="PANTHER" id="PTHR24286:SF30">
    <property type="entry name" value="3-EPI-6-DEOXOCATHASTERONE 23-MONOOXYGENASE CYP90D1"/>
    <property type="match status" value="1"/>
</dbReference>
<dbReference type="PANTHER" id="PTHR24286">
    <property type="entry name" value="CYTOCHROME P450 26"/>
    <property type="match status" value="1"/>
</dbReference>
<dbReference type="Pfam" id="PF00067">
    <property type="entry name" value="p450"/>
    <property type="match status" value="1"/>
</dbReference>
<dbReference type="PRINTS" id="PR00463">
    <property type="entry name" value="EP450I"/>
</dbReference>
<dbReference type="SUPFAM" id="SSF48264">
    <property type="entry name" value="Cytochrome P450"/>
    <property type="match status" value="1"/>
</dbReference>
<dbReference type="PROSITE" id="PS00086">
    <property type="entry name" value="CYTOCHROME_P450"/>
    <property type="match status" value="1"/>
</dbReference>
<name>C90D1_ARATH</name>
<accession>Q94IA6</accession>
<accession>Q9LIC5</accession>
<sequence>MDTSSSLLFFSFFFFIIIVIFNKINGLRSSPASKKKLNDHHVTSQSHGPKFPHGSLGWPVIGETIEFVSSAYSDRPESFMDKRRLMYGRVFKSHIFGTATIVSTDAEVNRAVLQSDSTAFVPFYPKTVRELMGKSSILLINGSLHRRFHGLVGSFLKSPLLKAQIVRDMHKFLSESMDLWSEDQPVLLQDVSKTVAFKVLAKALISVEKGEDLEELKREFENFISGLMSLPINFPGTQLHRSLQAKKNMVKQVERIIEGKIRKTKNKEEDDVIAKDVVDVLLKDSSEHLTHNLIANNMIDMMIPGHDSVPVLITLAVKFLSDSPAALNLLTEENMKLKSLKELTGEPLYWNDYLSLPFTQKVITETLRMGNVIIGVMRKAMKDVEIKGYVIPKGWCFLAYLRSVHLDKLYYESPYKFNPWRWQERDMNTSSFSPFGGGQRLCPGLDLARLETSVFLHHLVTRFRWIAEEDTIINFPTVHMKNKLPIWIKRI</sequence>
<gene>
    <name evidence="5" type="primary">CYP90D1</name>
    <name evidence="8" type="ordered locus">At3g13730</name>
    <name evidence="9" type="ORF">MMM17.15</name>
</gene>
<proteinExistence type="evidence at protein level"/>